<protein>
    <recommendedName>
        <fullName>Cytochrome b6-f complex subunit 8</fullName>
    </recommendedName>
    <alternativeName>
        <fullName>Cytochrome b6-f complex subunit PetN</fullName>
    </alternativeName>
    <alternativeName>
        <fullName>Cytochrome b6-f complex subunit VIII</fullName>
    </alternativeName>
</protein>
<organism>
    <name type="scientific">Cyanidium caldarium</name>
    <name type="common">Red alga</name>
    <dbReference type="NCBI Taxonomy" id="2771"/>
    <lineage>
        <taxon>Eukaryota</taxon>
        <taxon>Rhodophyta</taxon>
        <taxon>Bangiophyceae</taxon>
        <taxon>Cyanidiales</taxon>
        <taxon>Cyanidiaceae</taxon>
        <taxon>Cyanidium</taxon>
    </lineage>
</organism>
<keyword id="KW-0150">Chloroplast</keyword>
<keyword id="KW-0249">Electron transport</keyword>
<keyword id="KW-0472">Membrane</keyword>
<keyword id="KW-0602">Photosynthesis</keyword>
<keyword id="KW-0934">Plastid</keyword>
<keyword id="KW-0793">Thylakoid</keyword>
<keyword id="KW-0812">Transmembrane</keyword>
<keyword id="KW-1133">Transmembrane helix</keyword>
<keyword id="KW-0813">Transport</keyword>
<geneLocation type="chloroplast"/>
<sequence length="31" mass="3458">MNISLVDLTWACLMVSFTVSLALVVWARNGF</sequence>
<comment type="function">
    <text evidence="1">Component of the cytochrome b6-f complex, which mediates electron transfer between photosystem II (PSII) and photosystem I (PSI), cyclic electron flow around PSI, and state transitions.</text>
</comment>
<comment type="subunit">
    <text evidence="1">The 4 large subunits of the cytochrome b6-f complex are cytochrome b6, subunit IV (17 kDa polypeptide, PetD), cytochrome f and the Rieske protein, while the 4 small subunits are PetG, PetL, PetM and PetN. The complex functions as a dimer (By similarity).</text>
</comment>
<comment type="subcellular location">
    <subcellularLocation>
        <location evidence="1">Plastid</location>
        <location evidence="1">Chloroplast thylakoid membrane</location>
        <topology evidence="1">Single-pass membrane protein</topology>
    </subcellularLocation>
</comment>
<comment type="similarity">
    <text evidence="3">Belongs to the PetN family.</text>
</comment>
<proteinExistence type="inferred from homology"/>
<dbReference type="EMBL" id="AF022186">
    <property type="protein sequence ID" value="AAF12891.1"/>
    <property type="molecule type" value="Genomic_DNA"/>
</dbReference>
<dbReference type="RefSeq" id="NP_045203.1">
    <property type="nucleotide sequence ID" value="NC_001840.1"/>
</dbReference>
<dbReference type="SMR" id="Q9TLR6"/>
<dbReference type="GeneID" id="800232"/>
<dbReference type="GO" id="GO:0009535">
    <property type="term" value="C:chloroplast thylakoid membrane"/>
    <property type="evidence" value="ECO:0007669"/>
    <property type="project" value="UniProtKB-SubCell"/>
</dbReference>
<dbReference type="GO" id="GO:0009512">
    <property type="term" value="C:cytochrome b6f complex"/>
    <property type="evidence" value="ECO:0007669"/>
    <property type="project" value="InterPro"/>
</dbReference>
<dbReference type="GO" id="GO:0045158">
    <property type="term" value="F:electron transporter, transferring electrons within cytochrome b6/f complex of photosystem II activity"/>
    <property type="evidence" value="ECO:0007669"/>
    <property type="project" value="InterPro"/>
</dbReference>
<dbReference type="GO" id="GO:0017004">
    <property type="term" value="P:cytochrome complex assembly"/>
    <property type="evidence" value="ECO:0007669"/>
    <property type="project" value="UniProtKB-UniRule"/>
</dbReference>
<dbReference type="GO" id="GO:0015979">
    <property type="term" value="P:photosynthesis"/>
    <property type="evidence" value="ECO:0007669"/>
    <property type="project" value="UniProtKB-KW"/>
</dbReference>
<dbReference type="HAMAP" id="MF_00395">
    <property type="entry name" value="Cytb6_f_PetN"/>
    <property type="match status" value="1"/>
</dbReference>
<dbReference type="InterPro" id="IPR036143">
    <property type="entry name" value="Cytochr_b6-f_cplx_su8_sf"/>
</dbReference>
<dbReference type="InterPro" id="IPR005497">
    <property type="entry name" value="Cytochrome_b6-f_cplx_su8"/>
</dbReference>
<dbReference type="Pfam" id="PF03742">
    <property type="entry name" value="PetN"/>
    <property type="match status" value="1"/>
</dbReference>
<dbReference type="SUPFAM" id="SSF103451">
    <property type="entry name" value="PetN subunit of the cytochrome b6f complex"/>
    <property type="match status" value="1"/>
</dbReference>
<evidence type="ECO:0000250" key="1"/>
<evidence type="ECO:0000255" key="2"/>
<evidence type="ECO:0000305" key="3"/>
<name>PETN_CYACA</name>
<feature type="chain" id="PRO_0000217105" description="Cytochrome b6-f complex subunit 8">
    <location>
        <begin position="1"/>
        <end position="31"/>
    </location>
</feature>
<feature type="transmembrane region" description="Helical" evidence="2">
    <location>
        <begin position="5"/>
        <end position="25"/>
    </location>
</feature>
<accession>Q9TLR6</accession>
<gene>
    <name type="primary">petN</name>
    <name type="synonym">ycf42</name>
</gene>
<reference key="1">
    <citation type="journal article" date="2000" name="J. Mol. Evol.">
        <title>The structure and gene repertoire of an ancient red algal plastid genome.</title>
        <authorList>
            <person name="Gloeckner G."/>
            <person name="Rosenthal A."/>
            <person name="Valentin K.-U."/>
        </authorList>
    </citation>
    <scope>NUCLEOTIDE SEQUENCE [LARGE SCALE GENOMIC DNA]</scope>
    <source>
        <strain>RK-1</strain>
    </source>
</reference>